<organism>
    <name type="scientific">Chromohalobacter salexigens (strain ATCC BAA-138 / DSM 3043 / CIP 106854 / NCIMB 13768 / 1H11)</name>
    <dbReference type="NCBI Taxonomy" id="290398"/>
    <lineage>
        <taxon>Bacteria</taxon>
        <taxon>Pseudomonadati</taxon>
        <taxon>Pseudomonadota</taxon>
        <taxon>Gammaproteobacteria</taxon>
        <taxon>Oceanospirillales</taxon>
        <taxon>Halomonadaceae</taxon>
        <taxon>Chromohalobacter</taxon>
    </lineage>
</organism>
<dbReference type="EC" id="5.3.1.16" evidence="1"/>
<dbReference type="EMBL" id="CP000285">
    <property type="protein sequence ID" value="ABE57879.1"/>
    <property type="molecule type" value="Genomic_DNA"/>
</dbReference>
<dbReference type="RefSeq" id="WP_011505825.1">
    <property type="nucleotide sequence ID" value="NC_007963.1"/>
</dbReference>
<dbReference type="SMR" id="Q1R079"/>
<dbReference type="STRING" id="290398.Csal_0517"/>
<dbReference type="GeneID" id="95333271"/>
<dbReference type="KEGG" id="csa:Csal_0517"/>
<dbReference type="eggNOG" id="COG0106">
    <property type="taxonomic scope" value="Bacteria"/>
</dbReference>
<dbReference type="HOGENOM" id="CLU_048577_1_1_6"/>
<dbReference type="OrthoDB" id="9807749at2"/>
<dbReference type="UniPathway" id="UPA00031">
    <property type="reaction ID" value="UER00009"/>
</dbReference>
<dbReference type="Proteomes" id="UP000000239">
    <property type="component" value="Chromosome"/>
</dbReference>
<dbReference type="GO" id="GO:0005737">
    <property type="term" value="C:cytoplasm"/>
    <property type="evidence" value="ECO:0007669"/>
    <property type="project" value="UniProtKB-SubCell"/>
</dbReference>
<dbReference type="GO" id="GO:0003949">
    <property type="term" value="F:1-(5-phosphoribosyl)-5-[(5-phosphoribosylamino)methylideneamino]imidazole-4-carboxamide isomerase activity"/>
    <property type="evidence" value="ECO:0007669"/>
    <property type="project" value="UniProtKB-UniRule"/>
</dbReference>
<dbReference type="GO" id="GO:0000105">
    <property type="term" value="P:L-histidine biosynthetic process"/>
    <property type="evidence" value="ECO:0007669"/>
    <property type="project" value="UniProtKB-UniRule"/>
</dbReference>
<dbReference type="GO" id="GO:0000162">
    <property type="term" value="P:L-tryptophan biosynthetic process"/>
    <property type="evidence" value="ECO:0007669"/>
    <property type="project" value="TreeGrafter"/>
</dbReference>
<dbReference type="CDD" id="cd04732">
    <property type="entry name" value="HisA"/>
    <property type="match status" value="1"/>
</dbReference>
<dbReference type="FunFam" id="3.20.20.70:FF:000009">
    <property type="entry name" value="1-(5-phosphoribosyl)-5-[(5-phosphoribosylamino)methylideneamino] imidazole-4-carboxamide isomerase"/>
    <property type="match status" value="1"/>
</dbReference>
<dbReference type="Gene3D" id="3.20.20.70">
    <property type="entry name" value="Aldolase class I"/>
    <property type="match status" value="1"/>
</dbReference>
<dbReference type="HAMAP" id="MF_01014">
    <property type="entry name" value="HisA"/>
    <property type="match status" value="1"/>
</dbReference>
<dbReference type="InterPro" id="IPR013785">
    <property type="entry name" value="Aldolase_TIM"/>
</dbReference>
<dbReference type="InterPro" id="IPR006062">
    <property type="entry name" value="His_biosynth"/>
</dbReference>
<dbReference type="InterPro" id="IPR006063">
    <property type="entry name" value="HisA_bact_arch"/>
</dbReference>
<dbReference type="InterPro" id="IPR044524">
    <property type="entry name" value="Isoase_HisA-like"/>
</dbReference>
<dbReference type="InterPro" id="IPR023016">
    <property type="entry name" value="Isoase_HisA-like_bact"/>
</dbReference>
<dbReference type="InterPro" id="IPR011060">
    <property type="entry name" value="RibuloseP-bd_barrel"/>
</dbReference>
<dbReference type="NCBIfam" id="TIGR00007">
    <property type="entry name" value="1-(5-phosphoribosyl)-5-[(5-phosphoribosylamino)methylideneamino]imidazole-4-carboxamide isomerase"/>
    <property type="match status" value="1"/>
</dbReference>
<dbReference type="NCBIfam" id="NF010112">
    <property type="entry name" value="PRK13585.1"/>
    <property type="match status" value="1"/>
</dbReference>
<dbReference type="PANTHER" id="PTHR43090">
    <property type="entry name" value="1-(5-PHOSPHORIBOSYL)-5-[(5-PHOSPHORIBOSYLAMINO)METHYLIDENEAMINO] IMIDAZOLE-4-CARBOXAMIDE ISOMERASE"/>
    <property type="match status" value="1"/>
</dbReference>
<dbReference type="PANTHER" id="PTHR43090:SF2">
    <property type="entry name" value="1-(5-PHOSPHORIBOSYL)-5-[(5-PHOSPHORIBOSYLAMINO)METHYLIDENEAMINO] IMIDAZOLE-4-CARBOXAMIDE ISOMERASE"/>
    <property type="match status" value="1"/>
</dbReference>
<dbReference type="Pfam" id="PF00977">
    <property type="entry name" value="His_biosynth"/>
    <property type="match status" value="1"/>
</dbReference>
<dbReference type="SUPFAM" id="SSF51366">
    <property type="entry name" value="Ribulose-phoshate binding barrel"/>
    <property type="match status" value="1"/>
</dbReference>
<proteinExistence type="inferred from homology"/>
<sequence>MLVIPAIDLKDGQCVRLKQGRMDDSTTYGDDPVAMAARWVETGARRLHLVDLNGAFEGKPVNAEAVTAIARAYPDLPIQIGGGIRTAETIEAYLEAGVSYVIIGTQAVKEPAFVGEMCRRFPGHVIVGLDARDGYVATDGWAEVSTLKAVDLAKRFADDGVSSIVYTDIARDGMMQGVNIAATAELAREGGLPVIASGGVTHLGDIEALLEVADAGILGAITGRAIYEGKLDVAEAQRLCDAQLATRRS</sequence>
<gene>
    <name evidence="1" type="primary">hisA</name>
    <name type="ordered locus">Csal_0517</name>
</gene>
<comment type="catalytic activity">
    <reaction evidence="1">
        <text>1-(5-phospho-beta-D-ribosyl)-5-[(5-phospho-beta-D-ribosylamino)methylideneamino]imidazole-4-carboxamide = 5-[(5-phospho-1-deoxy-D-ribulos-1-ylimino)methylamino]-1-(5-phospho-beta-D-ribosyl)imidazole-4-carboxamide</text>
        <dbReference type="Rhea" id="RHEA:15469"/>
        <dbReference type="ChEBI" id="CHEBI:58435"/>
        <dbReference type="ChEBI" id="CHEBI:58525"/>
        <dbReference type="EC" id="5.3.1.16"/>
    </reaction>
</comment>
<comment type="pathway">
    <text evidence="1">Amino-acid biosynthesis; L-histidine biosynthesis; L-histidine from 5-phospho-alpha-D-ribose 1-diphosphate: step 4/9.</text>
</comment>
<comment type="subcellular location">
    <subcellularLocation>
        <location evidence="1">Cytoplasm</location>
    </subcellularLocation>
</comment>
<comment type="similarity">
    <text evidence="1">Belongs to the HisA/HisF family.</text>
</comment>
<evidence type="ECO:0000255" key="1">
    <source>
        <dbReference type="HAMAP-Rule" id="MF_01014"/>
    </source>
</evidence>
<name>HIS4_CHRSD</name>
<accession>Q1R079</accession>
<reference key="1">
    <citation type="journal article" date="2011" name="Stand. Genomic Sci.">
        <title>Complete genome sequence of the halophilic and highly halotolerant Chromohalobacter salexigens type strain (1H11(T)).</title>
        <authorList>
            <person name="Copeland A."/>
            <person name="O'Connor K."/>
            <person name="Lucas S."/>
            <person name="Lapidus A."/>
            <person name="Berry K.W."/>
            <person name="Detter J.C."/>
            <person name="Del Rio T.G."/>
            <person name="Hammon N."/>
            <person name="Dalin E."/>
            <person name="Tice H."/>
            <person name="Pitluck S."/>
            <person name="Bruce D."/>
            <person name="Goodwin L."/>
            <person name="Han C."/>
            <person name="Tapia R."/>
            <person name="Saunders E."/>
            <person name="Schmutz J."/>
            <person name="Brettin T."/>
            <person name="Larimer F."/>
            <person name="Land M."/>
            <person name="Hauser L."/>
            <person name="Vargas C."/>
            <person name="Nieto J.J."/>
            <person name="Kyrpides N.C."/>
            <person name="Ivanova N."/>
            <person name="Goker M."/>
            <person name="Klenk H.P."/>
            <person name="Csonka L.N."/>
            <person name="Woyke T."/>
        </authorList>
    </citation>
    <scope>NUCLEOTIDE SEQUENCE [LARGE SCALE GENOMIC DNA]</scope>
    <source>
        <strain>ATCC BAA-138 / DSM 3043 / CIP 106854 / NCIMB 13768 / 1H11</strain>
    </source>
</reference>
<keyword id="KW-0028">Amino-acid biosynthesis</keyword>
<keyword id="KW-0963">Cytoplasm</keyword>
<keyword id="KW-0368">Histidine biosynthesis</keyword>
<keyword id="KW-0413">Isomerase</keyword>
<keyword id="KW-1185">Reference proteome</keyword>
<feature type="chain" id="PRO_0000290463" description="1-(5-phosphoribosyl)-5-[(5-phosphoribosylamino)methylideneamino] imidazole-4-carboxamide isomerase">
    <location>
        <begin position="1"/>
        <end position="249"/>
    </location>
</feature>
<feature type="active site" description="Proton acceptor" evidence="1">
    <location>
        <position position="8"/>
    </location>
</feature>
<feature type="active site" description="Proton donor" evidence="1">
    <location>
        <position position="130"/>
    </location>
</feature>
<protein>
    <recommendedName>
        <fullName evidence="1">1-(5-phosphoribosyl)-5-[(5-phosphoribosylamino)methylideneamino] imidazole-4-carboxamide isomerase</fullName>
        <ecNumber evidence="1">5.3.1.16</ecNumber>
    </recommendedName>
    <alternativeName>
        <fullName evidence="1">Phosphoribosylformimino-5-aminoimidazole carboxamide ribotide isomerase</fullName>
    </alternativeName>
</protein>